<accession>Q8H0T9</accession>
<accession>Q9FHL5</accession>
<proteinExistence type="evidence at protein level"/>
<evidence type="ECO:0000250" key="1"/>
<evidence type="ECO:0000255" key="2"/>
<evidence type="ECO:0000255" key="3">
    <source>
        <dbReference type="HAMAP-Rule" id="MF_03022"/>
    </source>
</evidence>
<evidence type="ECO:0000256" key="4">
    <source>
        <dbReference type="SAM" id="MobiDB-lite"/>
    </source>
</evidence>
<evidence type="ECO:0000269" key="5">
    <source>
    </source>
</evidence>
<evidence type="ECO:0000303" key="6">
    <source>
    </source>
</evidence>
<evidence type="ECO:0000305" key="7"/>
<evidence type="ECO:0000305" key="8">
    <source>
    </source>
</evidence>
<evidence type="ECO:0000312" key="9">
    <source>
        <dbReference type="Araport" id="AT5G23430"/>
    </source>
</evidence>
<evidence type="ECO:0000312" key="10">
    <source>
        <dbReference type="EMBL" id="BAB09559.1"/>
    </source>
</evidence>
<keyword id="KW-0025">Alternative splicing</keyword>
<keyword id="KW-0963">Cytoplasm</keyword>
<keyword id="KW-0206">Cytoskeleton</keyword>
<keyword id="KW-0493">Microtubule</keyword>
<keyword id="KW-1185">Reference proteome</keyword>
<keyword id="KW-0677">Repeat</keyword>
<keyword id="KW-0853">WD repeat</keyword>
<organism>
    <name type="scientific">Arabidopsis thaliana</name>
    <name type="common">Mouse-ear cress</name>
    <dbReference type="NCBI Taxonomy" id="3702"/>
    <lineage>
        <taxon>Eukaryota</taxon>
        <taxon>Viridiplantae</taxon>
        <taxon>Streptophyta</taxon>
        <taxon>Embryophyta</taxon>
        <taxon>Tracheophyta</taxon>
        <taxon>Spermatophyta</taxon>
        <taxon>Magnoliopsida</taxon>
        <taxon>eudicotyledons</taxon>
        <taxon>Gunneridae</taxon>
        <taxon>Pentapetalae</taxon>
        <taxon>rosids</taxon>
        <taxon>malvids</taxon>
        <taxon>Brassicales</taxon>
        <taxon>Brassicaceae</taxon>
        <taxon>Camelineae</taxon>
        <taxon>Arabidopsis</taxon>
    </lineage>
</organism>
<gene>
    <name evidence="6" type="primary">KTN80.4</name>
    <name evidence="9" type="ordered locus">At5g23430</name>
    <name evidence="10" type="ORF">K19M13.6</name>
</gene>
<feature type="chain" id="PRO_0000051054" description="Katanin p80 WD40 repeat-containing subunit B1 homolog KTN80.4">
    <location>
        <begin position="1"/>
        <end position="837"/>
    </location>
</feature>
<feature type="repeat" description="WD 1" evidence="3">
    <location>
        <begin position="14"/>
        <end position="54"/>
    </location>
</feature>
<feature type="repeat" description="WD 2" evidence="3">
    <location>
        <begin position="57"/>
        <end position="96"/>
    </location>
</feature>
<feature type="repeat" description="WD 3" evidence="3">
    <location>
        <begin position="99"/>
        <end position="138"/>
    </location>
</feature>
<feature type="repeat" description="WD 4" evidence="3">
    <location>
        <begin position="141"/>
        <end position="182"/>
    </location>
</feature>
<feature type="repeat" description="WD 5" evidence="3">
    <location>
        <begin position="184"/>
        <end position="222"/>
    </location>
</feature>
<feature type="repeat" description="WD 6" evidence="3">
    <location>
        <begin position="225"/>
        <end position="265"/>
    </location>
</feature>
<feature type="repeat" description="WD 7" evidence="2">
    <location>
        <begin position="267"/>
        <end position="304"/>
    </location>
</feature>
<feature type="region of interest" description="Disordered" evidence="4">
    <location>
        <begin position="307"/>
        <end position="328"/>
    </location>
</feature>
<feature type="region of interest" description="Disordered" evidence="4">
    <location>
        <begin position="358"/>
        <end position="462"/>
    </location>
</feature>
<feature type="region of interest" description="Disordered" evidence="4">
    <location>
        <begin position="501"/>
        <end position="614"/>
    </location>
</feature>
<feature type="short sequence motif" description="DWD box" evidence="8">
    <location>
        <begin position="115"/>
        <end position="131"/>
    </location>
</feature>
<feature type="compositionally biased region" description="Polar residues" evidence="4">
    <location>
        <begin position="376"/>
        <end position="387"/>
    </location>
</feature>
<feature type="compositionally biased region" description="Polar residues" evidence="4">
    <location>
        <begin position="412"/>
        <end position="450"/>
    </location>
</feature>
<feature type="compositionally biased region" description="Low complexity" evidence="4">
    <location>
        <begin position="509"/>
        <end position="520"/>
    </location>
</feature>
<feature type="compositionally biased region" description="Basic and acidic residues" evidence="4">
    <location>
        <begin position="553"/>
        <end position="563"/>
    </location>
</feature>
<feature type="compositionally biased region" description="Basic and acidic residues" evidence="4">
    <location>
        <begin position="580"/>
        <end position="595"/>
    </location>
</feature>
<feature type="splice variant" id="VSP_015092" description="In isoform 2." evidence="7">
    <location>
        <position position="816"/>
    </location>
</feature>
<comment type="function">
    <text evidence="3 5">May participate in a complex which severs microtubules in an ATP-dependent manner (By similarity). This activity may promote rapid reorganization of cellular microtubule arrays (By similarity). Confers precision to microtubule (MT) severing by specific targeting of KTN1 to MT cleavage sites such as crossover or branching nucleation sites (PubMed:28978669). Together with other KTN80s, regulates cell elongation by modulating MT organization (PubMed:28978669).</text>
</comment>
<comment type="subunit">
    <text evidence="5">Component of KTN80-KTN1 complexes composed of a hexamer of KTN1-KTN80 heterodimers that sense microtubule (MT) geometry to confer precise MT severing (PubMed:28978669). Interacts directly with AAA1/KTN1, and weakly with KTN80.1 and KTN80.3 (PubMed:28978669).</text>
</comment>
<comment type="subcellular location">
    <subcellularLocation>
        <location evidence="3 5">Cytoplasm</location>
        <location evidence="3 5">Cytoskeleton</location>
    </subcellularLocation>
    <text evidence="5">Present in dynamic discrete particles specifically localized to microtubule (MT) crossovers and branching nucleation sites.</text>
</comment>
<comment type="alternative products">
    <event type="alternative splicing"/>
    <isoform>
        <id>Q8H0T9-1</id>
        <name>1</name>
        <sequence type="displayed"/>
    </isoform>
    <isoform>
        <id>Q8H0T9-2</id>
        <name>2</name>
        <sequence type="described" ref="VSP_015092"/>
    </isoform>
</comment>
<comment type="tissue specificity">
    <text evidence="5">Expressed in siliques, flowers, leaves, stems and roots.</text>
</comment>
<comment type="domain">
    <text evidence="1">The DWD box is required for interaction with DDB1A.</text>
</comment>
<comment type="disruption phenotype">
    <text evidence="5">The double mutant ktn80.3 ktn80.4 exhibits normal growth, but the quadruple mutant ktn80.1 ktn80.2 ktn80.3 ktn80.4 has a severe dwarf phenotype, with small and round dark-green rosette leaves as well as wide and short petioles, probably due to cell elongation defects, and associated with a complex cortical microtubule (MT) network with stable entanglements (PubMed:28978669). Plants missing KTN80s have a disruption of KTN1 recruitment at MT crossover or branching nucleation sites, leading to an abolishment of MT severing (PubMed:28978669).</text>
</comment>
<comment type="miscellaneous">
    <molecule>Isoform 2</molecule>
    <text evidence="7">May be due to a competing acceptor splice site.</text>
</comment>
<comment type="similarity">
    <text evidence="3">Belongs to the WD repeat KATNB1 family.</text>
</comment>
<comment type="sequence caution" evidence="7">
    <conflict type="erroneous gene model prediction">
        <sequence resource="EMBL-CDS" id="BAB09559"/>
    </conflict>
</comment>
<sequence>MTTKRAYKLQEFVAHSAAVNCLKIGRKSSRVLVTGGEDHKVNLWAIGKPNAILSLYGHSSGIDSVTFDASEVLVAAGAASGTIKLWDLEEAKIVRTLTGHRSNCISVDFHPFGEFFASGSLDTNLKIWDIRKKGCIHTYKGHTRGVNVLRFTPDGRWVVSGGEDNIVKVWDLTAGKLLTEFKSHEGQIQSLDFHPHEFLLATGSADRTVKFWDLETFELIGSGGPETAGVRCLSFNPDGKTVLCGLQESLKIFSWEPIRCHDGVDVGWSRLSDMNVHEGKLLGCSYNQSCVGVWVVDLSRTEPCMAGDTAQSNGHPEKRSCSGRDPVVLNDNNSKTVLGKLSVSQNVDPLLKETKSLGRLSVSQNSDPSTKETKSIGRSSTSQNSESSMKESKPLGRLSVSQNSDVSKESRTFSSTGSLPGTPHRVSSTNVSKATSGVSTAVSNAATSRRNFTKANPKANPVNKAADFAPVIVPRADPRIEQATESRAELDIIARTMPYSLQAADSRRSPSSRNNPDLPDASVLEMSESQPVEPNNIPDGGTLPGGKVGMRGATERSINDFRYKRYGRSNSRSRMGSPPRNHDENYDLVSHRSNRDPSPTESQKGGRFQSLVINRERRGRFSNFEGPVSNFSSGNMPAPNIRPSNMFKQRGNHMPVEQGIDSPSEENIVEDIMGKHNQFVSSMQSRLAKLQVVRRYWERNDVKNSIGSIEKMADNAVTADVLGIITERNEILTLDNCTSLLPLLTALLGSGMDQHLSVSLDLLLKLVRLYGSPIYSSLSAPASVGVDIEAEQRIERYSRCFVELEKVKACLPSLARRGGLVAKSVLELNLAFQEVSS</sequence>
<protein>
    <recommendedName>
        <fullName evidence="3 6">Katanin p80 WD40 repeat-containing subunit B1 homolog KTN80.4</fullName>
    </recommendedName>
</protein>
<dbReference type="EMBL" id="AB018110">
    <property type="protein sequence ID" value="BAB09559.1"/>
    <property type="status" value="ALT_SEQ"/>
    <property type="molecule type" value="Genomic_DNA"/>
</dbReference>
<dbReference type="EMBL" id="CP002688">
    <property type="protein sequence ID" value="AED93166.1"/>
    <property type="molecule type" value="Genomic_DNA"/>
</dbReference>
<dbReference type="EMBL" id="CP002688">
    <property type="protein sequence ID" value="AED93167.1"/>
    <property type="molecule type" value="Genomic_DNA"/>
</dbReference>
<dbReference type="EMBL" id="CP002688">
    <property type="protein sequence ID" value="ANM69335.1"/>
    <property type="molecule type" value="Genomic_DNA"/>
</dbReference>
<dbReference type="EMBL" id="BT002053">
    <property type="protein sequence ID" value="AAN72064.1"/>
    <property type="molecule type" value="mRNA"/>
</dbReference>
<dbReference type="RefSeq" id="NP_001318628.1">
    <molecule id="Q8H0T9-2"/>
    <property type="nucleotide sequence ID" value="NM_001343802.1"/>
</dbReference>
<dbReference type="RefSeq" id="NP_197734.2">
    <molecule id="Q8H0T9-2"/>
    <property type="nucleotide sequence ID" value="NM_122250.2"/>
</dbReference>
<dbReference type="RefSeq" id="NP_851064.1">
    <molecule id="Q8H0T9-1"/>
    <property type="nucleotide sequence ID" value="NM_180733.2"/>
</dbReference>
<dbReference type="SMR" id="Q8H0T9"/>
<dbReference type="BioGRID" id="17684">
    <property type="interactions" value="3"/>
</dbReference>
<dbReference type="FunCoup" id="Q8H0T9">
    <property type="interactions" value="1647"/>
</dbReference>
<dbReference type="IntAct" id="Q8H0T9">
    <property type="interactions" value="1"/>
</dbReference>
<dbReference type="STRING" id="3702.Q8H0T9"/>
<dbReference type="GlyGen" id="Q8H0T9">
    <property type="glycosylation" value="3 sites, 1 O-linked glycan (2 sites)"/>
</dbReference>
<dbReference type="iPTMnet" id="Q8H0T9"/>
<dbReference type="PaxDb" id="3702-AT5G23430.1"/>
<dbReference type="ProteomicsDB" id="237033">
    <molecule id="Q8H0T9-1"/>
</dbReference>
<dbReference type="EnsemblPlants" id="AT5G23430.1">
    <molecule id="Q8H0T9-1"/>
    <property type="protein sequence ID" value="AT5G23430.1"/>
    <property type="gene ID" value="AT5G23430"/>
</dbReference>
<dbReference type="EnsemblPlants" id="AT5G23430.2">
    <molecule id="Q8H0T9-2"/>
    <property type="protein sequence ID" value="AT5G23430.2"/>
    <property type="gene ID" value="AT5G23430"/>
</dbReference>
<dbReference type="EnsemblPlants" id="AT5G23430.3">
    <molecule id="Q8H0T9-2"/>
    <property type="protein sequence ID" value="AT5G23430.3"/>
    <property type="gene ID" value="AT5G23430"/>
</dbReference>
<dbReference type="GeneID" id="832409"/>
<dbReference type="Gramene" id="AT5G23430.1">
    <molecule id="Q8H0T9-1"/>
    <property type="protein sequence ID" value="AT5G23430.1"/>
    <property type="gene ID" value="AT5G23430"/>
</dbReference>
<dbReference type="Gramene" id="AT5G23430.2">
    <molecule id="Q8H0T9-2"/>
    <property type="protein sequence ID" value="AT5G23430.2"/>
    <property type="gene ID" value="AT5G23430"/>
</dbReference>
<dbReference type="Gramene" id="AT5G23430.3">
    <molecule id="Q8H0T9-2"/>
    <property type="protein sequence ID" value="AT5G23430.3"/>
    <property type="gene ID" value="AT5G23430"/>
</dbReference>
<dbReference type="KEGG" id="ath:AT5G23430"/>
<dbReference type="Araport" id="AT5G23430"/>
<dbReference type="TAIR" id="AT5G23430">
    <property type="gene designation" value="KTN80.4"/>
</dbReference>
<dbReference type="eggNOG" id="KOG0267">
    <property type="taxonomic scope" value="Eukaryota"/>
</dbReference>
<dbReference type="HOGENOM" id="CLU_007811_0_0_1"/>
<dbReference type="InParanoid" id="Q8H0T9"/>
<dbReference type="OMA" id="HPYDSTI"/>
<dbReference type="PhylomeDB" id="Q8H0T9"/>
<dbReference type="PRO" id="PR:Q8H0T9"/>
<dbReference type="Proteomes" id="UP000006548">
    <property type="component" value="Chromosome 5"/>
</dbReference>
<dbReference type="ExpressionAtlas" id="Q8H0T9">
    <property type="expression patterns" value="baseline and differential"/>
</dbReference>
<dbReference type="GO" id="GO:0080008">
    <property type="term" value="C:Cul4-RING E3 ubiquitin ligase complex"/>
    <property type="evidence" value="ECO:0000250"/>
    <property type="project" value="TAIR"/>
</dbReference>
<dbReference type="GO" id="GO:0005737">
    <property type="term" value="C:cytoplasm"/>
    <property type="evidence" value="ECO:0007669"/>
    <property type="project" value="UniProtKB-UniRule"/>
</dbReference>
<dbReference type="GO" id="GO:0008352">
    <property type="term" value="C:katanin complex"/>
    <property type="evidence" value="ECO:0007669"/>
    <property type="project" value="InterPro"/>
</dbReference>
<dbReference type="GO" id="GO:0005874">
    <property type="term" value="C:microtubule"/>
    <property type="evidence" value="ECO:0007669"/>
    <property type="project" value="UniProtKB-KW"/>
</dbReference>
<dbReference type="GO" id="GO:0015630">
    <property type="term" value="C:microtubule cytoskeleton"/>
    <property type="evidence" value="ECO:0000314"/>
    <property type="project" value="UniProtKB"/>
</dbReference>
<dbReference type="GO" id="GO:0008017">
    <property type="term" value="F:microtubule binding"/>
    <property type="evidence" value="ECO:0007669"/>
    <property type="project" value="UniProtKB-UniRule"/>
</dbReference>
<dbReference type="GO" id="GO:0051013">
    <property type="term" value="P:microtubule severing"/>
    <property type="evidence" value="ECO:0000315"/>
    <property type="project" value="UniProtKB"/>
</dbReference>
<dbReference type="GO" id="GO:0051510">
    <property type="term" value="P:regulation of unidimensional cell growth"/>
    <property type="evidence" value="ECO:0000315"/>
    <property type="project" value="UniProtKB"/>
</dbReference>
<dbReference type="CDD" id="cd00200">
    <property type="entry name" value="WD40"/>
    <property type="match status" value="1"/>
</dbReference>
<dbReference type="FunFam" id="2.130.10.10:FF:000192">
    <property type="entry name" value="Katanin p80 WD40 repeat-containing subunit B1 homolog"/>
    <property type="match status" value="1"/>
</dbReference>
<dbReference type="FunFam" id="2.130.10.10:FF:000626">
    <property type="entry name" value="Katanin p80 WD40 repeat-containing subunit B1 homolog"/>
    <property type="match status" value="1"/>
</dbReference>
<dbReference type="Gene3D" id="2.130.10.10">
    <property type="entry name" value="YVTN repeat-like/Quinoprotein amine dehydrogenase"/>
    <property type="match status" value="2"/>
</dbReference>
<dbReference type="HAMAP" id="MF_03022">
    <property type="entry name" value="Katanin_p80_B1"/>
    <property type="match status" value="1"/>
</dbReference>
<dbReference type="InterPro" id="IPR020472">
    <property type="entry name" value="G-protein_beta_WD-40_rep"/>
</dbReference>
<dbReference type="InterPro" id="IPR028021">
    <property type="entry name" value="Katanin_C-terminal"/>
</dbReference>
<dbReference type="InterPro" id="IPR026962">
    <property type="entry name" value="KTNB1"/>
</dbReference>
<dbReference type="InterPro" id="IPR015943">
    <property type="entry name" value="WD40/YVTN_repeat-like_dom_sf"/>
</dbReference>
<dbReference type="InterPro" id="IPR019775">
    <property type="entry name" value="WD40_repeat_CS"/>
</dbReference>
<dbReference type="InterPro" id="IPR036322">
    <property type="entry name" value="WD40_repeat_dom_sf"/>
</dbReference>
<dbReference type="InterPro" id="IPR001680">
    <property type="entry name" value="WD40_rpt"/>
</dbReference>
<dbReference type="PANTHER" id="PTHR19845">
    <property type="entry name" value="KATANIN P80 SUBUNIT"/>
    <property type="match status" value="1"/>
</dbReference>
<dbReference type="PANTHER" id="PTHR19845:SF0">
    <property type="entry name" value="KATANIN P80 WD40 REPEAT-CONTAINING SUBUNIT B1"/>
    <property type="match status" value="1"/>
</dbReference>
<dbReference type="Pfam" id="PF13925">
    <property type="entry name" value="Katanin_con80"/>
    <property type="match status" value="1"/>
</dbReference>
<dbReference type="Pfam" id="PF00400">
    <property type="entry name" value="WD40"/>
    <property type="match status" value="6"/>
</dbReference>
<dbReference type="PRINTS" id="PR00320">
    <property type="entry name" value="GPROTEINBRPT"/>
</dbReference>
<dbReference type="SMART" id="SM00320">
    <property type="entry name" value="WD40"/>
    <property type="match status" value="6"/>
</dbReference>
<dbReference type="SUPFAM" id="SSF50978">
    <property type="entry name" value="WD40 repeat-like"/>
    <property type="match status" value="1"/>
</dbReference>
<dbReference type="PROSITE" id="PS00678">
    <property type="entry name" value="WD_REPEATS_1"/>
    <property type="match status" value="2"/>
</dbReference>
<dbReference type="PROSITE" id="PS50082">
    <property type="entry name" value="WD_REPEATS_2"/>
    <property type="match status" value="5"/>
</dbReference>
<dbReference type="PROSITE" id="PS50294">
    <property type="entry name" value="WD_REPEATS_REGION"/>
    <property type="match status" value="1"/>
</dbReference>
<name>KTN84_ARATH</name>
<reference key="1">
    <citation type="journal article" date="1999" name="DNA Res.">
        <title>Structural analysis of Arabidopsis thaliana chromosome 5. IX. Sequence features of the regions of 1,011,550 bp covered by seventeen P1 and TAC clones.</title>
        <authorList>
            <person name="Kaneko T."/>
            <person name="Katoh T."/>
            <person name="Sato S."/>
            <person name="Nakamura Y."/>
            <person name="Asamizu E."/>
            <person name="Kotani H."/>
            <person name="Miyajima N."/>
            <person name="Tabata S."/>
        </authorList>
    </citation>
    <scope>NUCLEOTIDE SEQUENCE [LARGE SCALE GENOMIC DNA]</scope>
</reference>
<reference key="2">
    <citation type="journal article" date="2017" name="Plant J.">
        <title>Araport11: a complete reannotation of the Arabidopsis thaliana reference genome.</title>
        <authorList>
            <person name="Cheng C.Y."/>
            <person name="Krishnakumar V."/>
            <person name="Chan A.P."/>
            <person name="Thibaud-Nissen F."/>
            <person name="Schobel S."/>
            <person name="Town C.D."/>
        </authorList>
    </citation>
    <scope>GENOME REANNOTATION</scope>
    <source>
        <strain>cv. Columbia</strain>
    </source>
</reference>
<reference key="3">
    <citation type="journal article" date="2003" name="Science">
        <title>Empirical analysis of transcriptional activity in the Arabidopsis genome.</title>
        <authorList>
            <person name="Yamada K."/>
            <person name="Lim J."/>
            <person name="Dale J.M."/>
            <person name="Chen H."/>
            <person name="Shinn P."/>
            <person name="Palm C.J."/>
            <person name="Southwick A.M."/>
            <person name="Wu H.C."/>
            <person name="Kim C.J."/>
            <person name="Nguyen M."/>
            <person name="Pham P.K."/>
            <person name="Cheuk R.F."/>
            <person name="Karlin-Newmann G."/>
            <person name="Liu S.X."/>
            <person name="Lam B."/>
            <person name="Sakano H."/>
            <person name="Wu T."/>
            <person name="Yu G."/>
            <person name="Miranda M."/>
            <person name="Quach H.L."/>
            <person name="Tripp M."/>
            <person name="Chang C.H."/>
            <person name="Lee J.M."/>
            <person name="Toriumi M.J."/>
            <person name="Chan M.M."/>
            <person name="Tang C.C."/>
            <person name="Onodera C.S."/>
            <person name="Deng J.M."/>
            <person name="Akiyama K."/>
            <person name="Ansari Y."/>
            <person name="Arakawa T."/>
            <person name="Banh J."/>
            <person name="Banno F."/>
            <person name="Bowser L."/>
            <person name="Brooks S.Y."/>
            <person name="Carninci P."/>
            <person name="Chao Q."/>
            <person name="Choy N."/>
            <person name="Enju A."/>
            <person name="Goldsmith A.D."/>
            <person name="Gurjal M."/>
            <person name="Hansen N.F."/>
            <person name="Hayashizaki Y."/>
            <person name="Johnson-Hopson C."/>
            <person name="Hsuan V.W."/>
            <person name="Iida K."/>
            <person name="Karnes M."/>
            <person name="Khan S."/>
            <person name="Koesema E."/>
            <person name="Ishida J."/>
            <person name="Jiang P.X."/>
            <person name="Jones T."/>
            <person name="Kawai J."/>
            <person name="Kamiya A."/>
            <person name="Meyers C."/>
            <person name="Nakajima M."/>
            <person name="Narusaka M."/>
            <person name="Seki M."/>
            <person name="Sakurai T."/>
            <person name="Satou M."/>
            <person name="Tamse R."/>
            <person name="Vaysberg M."/>
            <person name="Wallender E.K."/>
            <person name="Wong C."/>
            <person name="Yamamura Y."/>
            <person name="Yuan S."/>
            <person name="Shinozaki K."/>
            <person name="Davis R.W."/>
            <person name="Theologis A."/>
            <person name="Ecker J.R."/>
        </authorList>
    </citation>
    <scope>NUCLEOTIDE SEQUENCE [LARGE SCALE MRNA] (ISOFORM 1)</scope>
    <source>
        <strain>cv. Columbia</strain>
    </source>
</reference>
<reference key="4">
    <citation type="journal article" date="2008" name="Plant Cell">
        <title>Characterization of Arabidopsis and rice DWD proteins and their roles as substrate receptors for CUL4-RING E3 ubiquitin ligases.</title>
        <authorList>
            <person name="Lee J.H."/>
            <person name="Terzaghi W."/>
            <person name="Gusmaroli G."/>
            <person name="Charron J.B."/>
            <person name="Yoon H.J."/>
            <person name="Chen H."/>
            <person name="He Y.J."/>
            <person name="Xiong Y."/>
            <person name="Deng X.W."/>
        </authorList>
    </citation>
    <scope>DWD MOTIF</scope>
</reference>
<reference key="5">
    <citation type="journal article" date="2008" name="Plant Cell">
        <title>Arabidopsis DDB1-CUL4 ASSOCIATED FACTOR1 forms a nuclear E3 ubiquitin ligase with DDB1 and CUL4 that is involved in multiple plant developmental processes.</title>
        <authorList>
            <person name="Zhang Y."/>
            <person name="Feng S."/>
            <person name="Chen F."/>
            <person name="Chen H."/>
            <person name="Wang J."/>
            <person name="McCall C."/>
            <person name="Xiong Y."/>
            <person name="Deng X.W."/>
        </authorList>
    </citation>
    <scope>GENE FAMILY</scope>
</reference>
<reference key="6">
    <citation type="journal article" date="2017" name="EMBO J.">
        <title>KTN80 confers precision to microtubule severing by specific targeting of katanin complexes in plant cells.</title>
        <authorList>
            <person name="Wang C."/>
            <person name="Liu W."/>
            <person name="Wang G."/>
            <person name="Li J."/>
            <person name="Dong L."/>
            <person name="Han L."/>
            <person name="Wang Q."/>
            <person name="Tian J."/>
            <person name="Yu Y."/>
            <person name="Gao C."/>
            <person name="Kong Z."/>
        </authorList>
    </citation>
    <scope>FUNCTION</scope>
    <scope>DISRUPTION PHENOTYPE</scope>
    <scope>SUBCELLULAR LOCATION</scope>
    <scope>TISSUE SPECIFICITY</scope>
    <scope>SUBUNIT</scope>
    <scope>INTERACTION WITH AAA1/KTN1; KTN80.1 AND KTN80.3</scope>
    <scope>GENE FAMILY</scope>
    <scope>NOMENCLATURE</scope>
    <source>
        <strain>cv. Columbia</strain>
    </source>
</reference>